<feature type="chain" id="PRO_0000288228" description="tRNA (guanine-N(7)-)-methyltransferase">
    <location>
        <begin position="1"/>
        <end position="239"/>
    </location>
</feature>
<feature type="region of interest" description="Interaction with RNA" evidence="2">
    <location>
        <begin position="150"/>
        <end position="155"/>
    </location>
</feature>
<feature type="active site" evidence="1">
    <location>
        <position position="144"/>
    </location>
</feature>
<feature type="binding site" evidence="2">
    <location>
        <position position="69"/>
    </location>
    <ligand>
        <name>S-adenosyl-L-methionine</name>
        <dbReference type="ChEBI" id="CHEBI:59789"/>
    </ligand>
</feature>
<feature type="binding site" evidence="2">
    <location>
        <position position="94"/>
    </location>
    <ligand>
        <name>S-adenosyl-L-methionine</name>
        <dbReference type="ChEBI" id="CHEBI:59789"/>
    </ligand>
</feature>
<feature type="binding site" evidence="2">
    <location>
        <position position="121"/>
    </location>
    <ligand>
        <name>S-adenosyl-L-methionine</name>
        <dbReference type="ChEBI" id="CHEBI:59789"/>
    </ligand>
</feature>
<feature type="binding site" evidence="2">
    <location>
        <position position="144"/>
    </location>
    <ligand>
        <name>S-adenosyl-L-methionine</name>
        <dbReference type="ChEBI" id="CHEBI:59789"/>
    </ligand>
</feature>
<feature type="binding site" evidence="2">
    <location>
        <position position="148"/>
    </location>
    <ligand>
        <name>substrate</name>
    </ligand>
</feature>
<feature type="binding site" evidence="2">
    <location>
        <position position="180"/>
    </location>
    <ligand>
        <name>substrate</name>
    </ligand>
</feature>
<feature type="binding site" evidence="2">
    <location>
        <begin position="217"/>
        <end position="220"/>
    </location>
    <ligand>
        <name>substrate</name>
    </ligand>
</feature>
<reference key="1">
    <citation type="journal article" date="2006" name="BMC Genomics">
        <title>Complete genome sequence of Shigella flexneri 5b and comparison with Shigella flexneri 2a.</title>
        <authorList>
            <person name="Nie H."/>
            <person name="Yang F."/>
            <person name="Zhang X."/>
            <person name="Yang J."/>
            <person name="Chen L."/>
            <person name="Wang J."/>
            <person name="Xiong Z."/>
            <person name="Peng J."/>
            <person name="Sun L."/>
            <person name="Dong J."/>
            <person name="Xue Y."/>
            <person name="Xu X."/>
            <person name="Chen S."/>
            <person name="Yao Z."/>
            <person name="Shen Y."/>
            <person name="Jin Q."/>
        </authorList>
    </citation>
    <scope>NUCLEOTIDE SEQUENCE [LARGE SCALE GENOMIC DNA]</scope>
    <source>
        <strain>8401</strain>
    </source>
</reference>
<dbReference type="EC" id="2.1.1.33" evidence="2"/>
<dbReference type="EMBL" id="CP000266">
    <property type="protein sequence ID" value="ABF05087.1"/>
    <property type="molecule type" value="Genomic_DNA"/>
</dbReference>
<dbReference type="RefSeq" id="WP_000786911.1">
    <property type="nucleotide sequence ID" value="NC_008258.1"/>
</dbReference>
<dbReference type="SMR" id="Q0T0S8"/>
<dbReference type="GeneID" id="93779031"/>
<dbReference type="KEGG" id="sfv:SFV_3018"/>
<dbReference type="HOGENOM" id="CLU_050910_0_1_6"/>
<dbReference type="UniPathway" id="UPA00989"/>
<dbReference type="Proteomes" id="UP000000659">
    <property type="component" value="Chromosome"/>
</dbReference>
<dbReference type="GO" id="GO:0043527">
    <property type="term" value="C:tRNA methyltransferase complex"/>
    <property type="evidence" value="ECO:0007669"/>
    <property type="project" value="TreeGrafter"/>
</dbReference>
<dbReference type="GO" id="GO:0008176">
    <property type="term" value="F:tRNA (guanine(46)-N7)-methyltransferase activity"/>
    <property type="evidence" value="ECO:0007669"/>
    <property type="project" value="UniProtKB-UniRule"/>
</dbReference>
<dbReference type="FunFam" id="3.40.50.150:FF:000024">
    <property type="entry name" value="tRNA (guanine-N(7)-)-methyltransferase"/>
    <property type="match status" value="1"/>
</dbReference>
<dbReference type="Gene3D" id="3.40.50.150">
    <property type="entry name" value="Vaccinia Virus protein VP39"/>
    <property type="match status" value="1"/>
</dbReference>
<dbReference type="HAMAP" id="MF_01057">
    <property type="entry name" value="tRNA_methyltr_TrmB"/>
    <property type="match status" value="1"/>
</dbReference>
<dbReference type="InterPro" id="IPR029063">
    <property type="entry name" value="SAM-dependent_MTases_sf"/>
</dbReference>
<dbReference type="InterPro" id="IPR003358">
    <property type="entry name" value="tRNA_(Gua-N-7)_MeTrfase_Trmb"/>
</dbReference>
<dbReference type="InterPro" id="IPR055361">
    <property type="entry name" value="tRNA_methyltr_TrmB_bact"/>
</dbReference>
<dbReference type="NCBIfam" id="TIGR00091">
    <property type="entry name" value="tRNA (guanosine(46)-N7)-methyltransferase TrmB"/>
    <property type="match status" value="1"/>
</dbReference>
<dbReference type="PANTHER" id="PTHR23417">
    <property type="entry name" value="3-DEOXY-D-MANNO-OCTULOSONIC-ACID TRANSFERASE/TRNA GUANINE-N 7 - -METHYLTRANSFERASE"/>
    <property type="match status" value="1"/>
</dbReference>
<dbReference type="PANTHER" id="PTHR23417:SF14">
    <property type="entry name" value="PENTACOTRIPEPTIDE-REPEAT REGION OF PRORP DOMAIN-CONTAINING PROTEIN"/>
    <property type="match status" value="1"/>
</dbReference>
<dbReference type="Pfam" id="PF02390">
    <property type="entry name" value="Methyltransf_4"/>
    <property type="match status" value="1"/>
</dbReference>
<dbReference type="SUPFAM" id="SSF53335">
    <property type="entry name" value="S-adenosyl-L-methionine-dependent methyltransferases"/>
    <property type="match status" value="1"/>
</dbReference>
<dbReference type="PROSITE" id="PS51625">
    <property type="entry name" value="SAM_MT_TRMB"/>
    <property type="match status" value="1"/>
</dbReference>
<gene>
    <name evidence="2" type="primary">trmB</name>
    <name type="ordered locus">SFV_3018</name>
</gene>
<comment type="function">
    <text evidence="2">Catalyzes the formation of N(7)-methylguanine at position 46 (m7G46) in tRNA.</text>
</comment>
<comment type="catalytic activity">
    <reaction evidence="2">
        <text>guanosine(46) in tRNA + S-adenosyl-L-methionine = N(7)-methylguanosine(46) in tRNA + S-adenosyl-L-homocysteine</text>
        <dbReference type="Rhea" id="RHEA:42708"/>
        <dbReference type="Rhea" id="RHEA-COMP:10188"/>
        <dbReference type="Rhea" id="RHEA-COMP:10189"/>
        <dbReference type="ChEBI" id="CHEBI:57856"/>
        <dbReference type="ChEBI" id="CHEBI:59789"/>
        <dbReference type="ChEBI" id="CHEBI:74269"/>
        <dbReference type="ChEBI" id="CHEBI:74480"/>
        <dbReference type="EC" id="2.1.1.33"/>
    </reaction>
</comment>
<comment type="pathway">
    <text evidence="2">tRNA modification; N(7)-methylguanine-tRNA biosynthesis.</text>
</comment>
<comment type="subunit">
    <text evidence="2">Monomer.</text>
</comment>
<comment type="similarity">
    <text evidence="2">Belongs to the class I-like SAM-binding methyltransferase superfamily. TrmB family.</text>
</comment>
<evidence type="ECO:0000250" key="1"/>
<evidence type="ECO:0000255" key="2">
    <source>
        <dbReference type="HAMAP-Rule" id="MF_01057"/>
    </source>
</evidence>
<accession>Q0T0S8</accession>
<keyword id="KW-0489">Methyltransferase</keyword>
<keyword id="KW-0949">S-adenosyl-L-methionine</keyword>
<keyword id="KW-0808">Transferase</keyword>
<keyword id="KW-0819">tRNA processing</keyword>
<proteinExistence type="inferred from homology"/>
<sequence>MKNDVISPEFDENGRPLRRIRSFVRRQGRLTKGQEHALENYWPVMGVEFSEDMLDFPALFGREAPVTLEIGFGMGASLVAMAKDRPEQDFLGIEVHSPGVGACLASAHEEGLSNLRVMCHDAVEVLHKMIPDNSLRMVQLFFPDPWHKARHNKRRIVQVPFAELVKSKLQLGGVFHMATDWEPYAEHMLEVMSSIDGYKNLSESNDYVPRPASRPVTKFEQRGHRLGHGVWDLMFERVK</sequence>
<name>TRMB_SHIF8</name>
<organism>
    <name type="scientific">Shigella flexneri serotype 5b (strain 8401)</name>
    <dbReference type="NCBI Taxonomy" id="373384"/>
    <lineage>
        <taxon>Bacteria</taxon>
        <taxon>Pseudomonadati</taxon>
        <taxon>Pseudomonadota</taxon>
        <taxon>Gammaproteobacteria</taxon>
        <taxon>Enterobacterales</taxon>
        <taxon>Enterobacteriaceae</taxon>
        <taxon>Shigella</taxon>
    </lineage>
</organism>
<protein>
    <recommendedName>
        <fullName evidence="2">tRNA (guanine-N(7)-)-methyltransferase</fullName>
        <ecNumber evidence="2">2.1.1.33</ecNumber>
    </recommendedName>
    <alternativeName>
        <fullName evidence="2">tRNA (guanine(46)-N(7))-methyltransferase</fullName>
    </alternativeName>
    <alternativeName>
        <fullName evidence="2">tRNA(m7G46)-methyltransferase</fullName>
    </alternativeName>
</protein>